<reference key="1">
    <citation type="journal article" date="2009" name="Genome Res.">
        <title>Comparative genomic analyses of the human fungal pathogens Coccidioides and their relatives.</title>
        <authorList>
            <person name="Sharpton T.J."/>
            <person name="Stajich J.E."/>
            <person name="Rounsley S.D."/>
            <person name="Gardner M.J."/>
            <person name="Wortman J.R."/>
            <person name="Jordar V.S."/>
            <person name="Maiti R."/>
            <person name="Kodira C.D."/>
            <person name="Neafsey D.E."/>
            <person name="Zeng Q."/>
            <person name="Hung C.-Y."/>
            <person name="McMahan C."/>
            <person name="Muszewska A."/>
            <person name="Grynberg M."/>
            <person name="Mandel M.A."/>
            <person name="Kellner E.M."/>
            <person name="Barker B.M."/>
            <person name="Galgiani J.N."/>
            <person name="Orbach M.J."/>
            <person name="Kirkland T.N."/>
            <person name="Cole G.T."/>
            <person name="Henn M.R."/>
            <person name="Birren B.W."/>
            <person name="Taylor J.W."/>
        </authorList>
    </citation>
    <scope>NUCLEOTIDE SEQUENCE [LARGE SCALE GENOMIC DNA]</scope>
    <source>
        <strain>RS</strain>
    </source>
</reference>
<reference key="2">
    <citation type="journal article" date="2010" name="Genome Res.">
        <title>Population genomic sequencing of Coccidioides fungi reveals recent hybridization and transposon control.</title>
        <authorList>
            <person name="Neafsey D.E."/>
            <person name="Barker B.M."/>
            <person name="Sharpton T.J."/>
            <person name="Stajich J.E."/>
            <person name="Park D.J."/>
            <person name="Whiston E."/>
            <person name="Hung C.-Y."/>
            <person name="McMahan C."/>
            <person name="White J."/>
            <person name="Sykes S."/>
            <person name="Heiman D."/>
            <person name="Young S."/>
            <person name="Zeng Q."/>
            <person name="Abouelleil A."/>
            <person name="Aftuck L."/>
            <person name="Bessette D."/>
            <person name="Brown A."/>
            <person name="FitzGerald M."/>
            <person name="Lui A."/>
            <person name="Macdonald J.P."/>
            <person name="Priest M."/>
            <person name="Orbach M.J."/>
            <person name="Galgiani J.N."/>
            <person name="Kirkland T.N."/>
            <person name="Cole G.T."/>
            <person name="Birren B.W."/>
            <person name="Henn M.R."/>
            <person name="Taylor J.W."/>
            <person name="Rounsley S.D."/>
        </authorList>
    </citation>
    <scope>GENOME REANNOTATION</scope>
    <source>
        <strain>RS</strain>
    </source>
</reference>
<evidence type="ECO:0000250" key="1"/>
<evidence type="ECO:0000250" key="2">
    <source>
        <dbReference type="UniProtKB" id="P43601"/>
    </source>
</evidence>
<evidence type="ECO:0000256" key="3">
    <source>
        <dbReference type="SAM" id="MobiDB-lite"/>
    </source>
</evidence>
<evidence type="ECO:0000305" key="4"/>
<comment type="function">
    <text evidence="1">The PI(3,5)P2 regulatory complex regulates both the synthesis and turnover of phosphatidylinositol 3,5-bisphosphate (PtdIns(3,5)P2). Necessary for proper vacuole morphology. Plays an important role in osmotically-induced vacuole fragmentation. Required for cytoplasm to vacuole transport (Cvt) vesicle formation, pexophagy and starvation-induced autophagy. Involved in correct ATG9 trafficking to the pre-autophagosomal structure. Might also be involved in premeiotic DNA replication (By similarity).</text>
</comment>
<comment type="subunit">
    <text evidence="1">Component of the PI(3,5)P2 regulatory complex.</text>
</comment>
<comment type="subcellular location">
    <subcellularLocation>
        <location evidence="1">Preautophagosomal structure membrane</location>
        <topology evidence="1">Peripheral membrane protein</topology>
    </subcellularLocation>
    <subcellularLocation>
        <location evidence="1">Vacuole membrane</location>
        <topology evidence="1">Peripheral membrane protein</topology>
    </subcellularLocation>
    <subcellularLocation>
        <location evidence="1">Endosome membrane</location>
        <topology evidence="1">Peripheral membrane protein</topology>
    </subcellularLocation>
</comment>
<comment type="domain">
    <text evidence="1">The N-terminus might form a beta-propeller domain involved in specific binding to phosphatidylinositol 3,5-bisphosphate (PIP2), leading to the association of the protein to the membrane.</text>
</comment>
<comment type="domain">
    <text evidence="2">The L/FRRG motif is essential for the cytoplasm to vacuole transport (Cvt) pathway, for the recruitment of ATG8 and ATG16 to the PAS in nutrient-rich medium, and for its recruitment to and dissociation from the PAS under starvation conditions.</text>
</comment>
<comment type="similarity">
    <text evidence="4">Belongs to the WD repeat PROPPIN family.</text>
</comment>
<name>ATG18_COCIM</name>
<accession>Q1DKJ3</accession>
<accession>J3K2F7</accession>
<proteinExistence type="inferred from homology"/>
<gene>
    <name type="primary">ATG18</name>
    <name type="ORF">CIMG_09170</name>
</gene>
<sequence>MSMNFVTFNQDYSYLAVGTSKGFRIFTTDPFGKSYETKEGNIAILEMLFSTSLVAVILSPRRLQIMNTKRQSVICELTFPTTVLAIRLNRKRLVIVLEDQIYIYDIQTMKLVYTIETSPNPNAICALAPSSDNCYLAYPLPQKAPPPSFSPPSHGPPSNTHIPPTSGEVLIFDAYKLEAVNVVEAHKSPLSFLALNSEGTLLATASDKGTIIRVFSVPAAHKLYQFRRGSMPSRIYSMSFNITSTLLCVSSATETIHIFKLGQQQGLSKTSSPSRKLESSRGSGDESAVESASSEMSSRKHNGTFMGMIRRTSQNVGNSFAATVGGYLPKGVTEMWEPERDFAWIKLPKSNGGNGGSGPVRSVVAMSSNTPQVMVVTSEGNFYVFNIDLSKGGEGTLVKQYSVLDSSDRMGSTDLDY</sequence>
<keyword id="KW-0072">Autophagy</keyword>
<keyword id="KW-0967">Endosome</keyword>
<keyword id="KW-0472">Membrane</keyword>
<keyword id="KW-0653">Protein transport</keyword>
<keyword id="KW-1185">Reference proteome</keyword>
<keyword id="KW-0677">Repeat</keyword>
<keyword id="KW-0813">Transport</keyword>
<keyword id="KW-0926">Vacuole</keyword>
<keyword id="KW-0853">WD repeat</keyword>
<organism>
    <name type="scientific">Coccidioides immitis (strain RS)</name>
    <name type="common">Valley fever fungus</name>
    <dbReference type="NCBI Taxonomy" id="246410"/>
    <lineage>
        <taxon>Eukaryota</taxon>
        <taxon>Fungi</taxon>
        <taxon>Dikarya</taxon>
        <taxon>Ascomycota</taxon>
        <taxon>Pezizomycotina</taxon>
        <taxon>Eurotiomycetes</taxon>
        <taxon>Eurotiomycetidae</taxon>
        <taxon>Onygenales</taxon>
        <taxon>Onygenaceae</taxon>
        <taxon>Coccidioides</taxon>
    </lineage>
</organism>
<protein>
    <recommendedName>
        <fullName>Autophagy-related protein 18</fullName>
    </recommendedName>
</protein>
<feature type="chain" id="PRO_0000318001" description="Autophagy-related protein 18">
    <location>
        <begin position="1"/>
        <end position="417"/>
    </location>
</feature>
<feature type="repeat" description="WD 1">
    <location>
        <begin position="1"/>
        <end position="36"/>
    </location>
</feature>
<feature type="repeat" description="WD 2">
    <location>
        <begin position="76"/>
        <end position="114"/>
    </location>
</feature>
<feature type="repeat" description="WD 3">
    <location>
        <begin position="185"/>
        <end position="225"/>
    </location>
</feature>
<feature type="repeat" description="WD 4">
    <location>
        <begin position="230"/>
        <end position="269"/>
    </location>
</feature>
<feature type="repeat" description="WD 5">
    <location>
        <begin position="300"/>
        <end position="346"/>
    </location>
</feature>
<feature type="repeat" description="WD 6">
    <location>
        <begin position="355"/>
        <end position="395"/>
    </location>
</feature>
<feature type="region of interest" description="Disordered" evidence="3">
    <location>
        <begin position="267"/>
        <end position="300"/>
    </location>
</feature>
<feature type="short sequence motif" description="L/FRRG motif" evidence="2">
    <location>
        <begin position="226"/>
        <end position="230"/>
    </location>
</feature>
<feature type="compositionally biased region" description="Low complexity" evidence="3">
    <location>
        <begin position="285"/>
        <end position="296"/>
    </location>
</feature>
<dbReference type="EMBL" id="GG704915">
    <property type="protein sequence ID" value="EAS27966.3"/>
    <property type="molecule type" value="Genomic_DNA"/>
</dbReference>
<dbReference type="RefSeq" id="XP_001239549.1">
    <property type="nucleotide sequence ID" value="XM_001239548.2"/>
</dbReference>
<dbReference type="SMR" id="Q1DKJ3"/>
<dbReference type="FunCoup" id="Q1DKJ3">
    <property type="interactions" value="538"/>
</dbReference>
<dbReference type="STRING" id="246410.Q1DKJ3"/>
<dbReference type="GeneID" id="4558284"/>
<dbReference type="KEGG" id="cim:CIMG_09170"/>
<dbReference type="VEuPathDB" id="FungiDB:CIMG_09170"/>
<dbReference type="InParanoid" id="Q1DKJ3"/>
<dbReference type="OMA" id="NIAILEM"/>
<dbReference type="OrthoDB" id="1667587at2759"/>
<dbReference type="Proteomes" id="UP000001261">
    <property type="component" value="Unassembled WGS sequence"/>
</dbReference>
<dbReference type="GO" id="GO:0010008">
    <property type="term" value="C:endosome membrane"/>
    <property type="evidence" value="ECO:0007669"/>
    <property type="project" value="UniProtKB-SubCell"/>
</dbReference>
<dbReference type="GO" id="GO:0034045">
    <property type="term" value="C:phagophore assembly site membrane"/>
    <property type="evidence" value="ECO:0007669"/>
    <property type="project" value="UniProtKB-SubCell"/>
</dbReference>
<dbReference type="GO" id="GO:0005774">
    <property type="term" value="C:vacuolar membrane"/>
    <property type="evidence" value="ECO:0007669"/>
    <property type="project" value="UniProtKB-SubCell"/>
</dbReference>
<dbReference type="GO" id="GO:0006914">
    <property type="term" value="P:autophagy"/>
    <property type="evidence" value="ECO:0007669"/>
    <property type="project" value="UniProtKB-KW"/>
</dbReference>
<dbReference type="GO" id="GO:0015031">
    <property type="term" value="P:protein transport"/>
    <property type="evidence" value="ECO:0007669"/>
    <property type="project" value="UniProtKB-KW"/>
</dbReference>
<dbReference type="FunFam" id="2.130.10.10:FF:000965">
    <property type="entry name" value="Autophagy-like protein 18 Atg18"/>
    <property type="match status" value="1"/>
</dbReference>
<dbReference type="Gene3D" id="2.130.10.10">
    <property type="entry name" value="YVTN repeat-like/Quinoprotein amine dehydrogenase"/>
    <property type="match status" value="2"/>
</dbReference>
<dbReference type="InterPro" id="IPR048720">
    <property type="entry name" value="PROPPIN"/>
</dbReference>
<dbReference type="InterPro" id="IPR015943">
    <property type="entry name" value="WD40/YVTN_repeat-like_dom_sf"/>
</dbReference>
<dbReference type="InterPro" id="IPR036322">
    <property type="entry name" value="WD40_repeat_dom_sf"/>
</dbReference>
<dbReference type="InterPro" id="IPR001680">
    <property type="entry name" value="WD40_rpt"/>
</dbReference>
<dbReference type="PANTHER" id="PTHR11227">
    <property type="entry name" value="WD-REPEAT PROTEIN INTERACTING WITH PHOSPHOINOSIDES WIPI -RELATED"/>
    <property type="match status" value="1"/>
</dbReference>
<dbReference type="Pfam" id="PF21032">
    <property type="entry name" value="PROPPIN"/>
    <property type="match status" value="2"/>
</dbReference>
<dbReference type="SMART" id="SM00320">
    <property type="entry name" value="WD40"/>
    <property type="match status" value="2"/>
</dbReference>
<dbReference type="SUPFAM" id="SSF50978">
    <property type="entry name" value="WD40 repeat-like"/>
    <property type="match status" value="1"/>
</dbReference>